<dbReference type="EMBL" id="X71439">
    <property type="protein sequence ID" value="CAA50573.1"/>
    <property type="status" value="ALT_INIT"/>
    <property type="molecule type" value="Genomic_DNA"/>
</dbReference>
<dbReference type="EMBL" id="BT096075">
    <property type="status" value="NOT_ANNOTATED_CDS"/>
    <property type="molecule type" value="Genomic_DNA"/>
</dbReference>
<dbReference type="PIR" id="S35701">
    <property type="entry name" value="S35701"/>
</dbReference>
<dbReference type="RefSeq" id="XP_006600825.1">
    <property type="nucleotide sequence ID" value="XM_006600762.2"/>
</dbReference>
<dbReference type="SMR" id="P34811"/>
<dbReference type="FunCoup" id="P34811">
    <property type="interactions" value="1789"/>
</dbReference>
<dbReference type="STRING" id="3847.P34811"/>
<dbReference type="PaxDb" id="3847-GLYMA17G14650.1"/>
<dbReference type="ProMEX" id="P34811"/>
<dbReference type="EnsemblPlants" id="KRH04069">
    <property type="protein sequence ID" value="KRH04069"/>
    <property type="gene ID" value="GLYMA_17G137600"/>
</dbReference>
<dbReference type="Gramene" id="KRH04069">
    <property type="protein sequence ID" value="KRH04069"/>
    <property type="gene ID" value="GLYMA_17G137600"/>
</dbReference>
<dbReference type="eggNOG" id="KOG0465">
    <property type="taxonomic scope" value="Eukaryota"/>
</dbReference>
<dbReference type="HOGENOM" id="CLU_002794_4_1_1"/>
<dbReference type="InParanoid" id="P34811"/>
<dbReference type="OMA" id="MDDMVGG"/>
<dbReference type="OrthoDB" id="198619at2759"/>
<dbReference type="UniPathway" id="UPA00345"/>
<dbReference type="Proteomes" id="UP000008827">
    <property type="component" value="Chromosome 17"/>
</dbReference>
<dbReference type="GO" id="GO:0009507">
    <property type="term" value="C:chloroplast"/>
    <property type="evidence" value="ECO:0007669"/>
    <property type="project" value="UniProtKB-SubCell"/>
</dbReference>
<dbReference type="GO" id="GO:0005525">
    <property type="term" value="F:GTP binding"/>
    <property type="evidence" value="ECO:0007669"/>
    <property type="project" value="UniProtKB-UniRule"/>
</dbReference>
<dbReference type="GO" id="GO:0003924">
    <property type="term" value="F:GTPase activity"/>
    <property type="evidence" value="ECO:0007669"/>
    <property type="project" value="UniProtKB-UniRule"/>
</dbReference>
<dbReference type="GO" id="GO:0003746">
    <property type="term" value="F:translation elongation factor activity"/>
    <property type="evidence" value="ECO:0007669"/>
    <property type="project" value="UniProtKB-UniRule"/>
</dbReference>
<dbReference type="GO" id="GO:0032790">
    <property type="term" value="P:ribosome disassembly"/>
    <property type="evidence" value="ECO:0000318"/>
    <property type="project" value="GO_Central"/>
</dbReference>
<dbReference type="CDD" id="cd01886">
    <property type="entry name" value="EF-G"/>
    <property type="match status" value="1"/>
</dbReference>
<dbReference type="CDD" id="cd16262">
    <property type="entry name" value="EFG_III"/>
    <property type="match status" value="1"/>
</dbReference>
<dbReference type="CDD" id="cd01434">
    <property type="entry name" value="EFG_mtEFG1_IV"/>
    <property type="match status" value="1"/>
</dbReference>
<dbReference type="CDD" id="cd03713">
    <property type="entry name" value="EFG_mtEFG_C"/>
    <property type="match status" value="1"/>
</dbReference>
<dbReference type="CDD" id="cd04088">
    <property type="entry name" value="EFG_mtEFG_II"/>
    <property type="match status" value="1"/>
</dbReference>
<dbReference type="FunFam" id="2.40.30.10:FF:000006">
    <property type="entry name" value="Elongation factor G"/>
    <property type="match status" value="1"/>
</dbReference>
<dbReference type="FunFam" id="3.30.230.10:FF:000003">
    <property type="entry name" value="Elongation factor G"/>
    <property type="match status" value="1"/>
</dbReference>
<dbReference type="FunFam" id="3.30.70.240:FF:000001">
    <property type="entry name" value="Elongation factor G"/>
    <property type="match status" value="1"/>
</dbReference>
<dbReference type="FunFam" id="3.30.70.870:FF:000001">
    <property type="entry name" value="Elongation factor G"/>
    <property type="match status" value="1"/>
</dbReference>
<dbReference type="FunFam" id="3.40.50.300:FF:000029">
    <property type="entry name" value="Elongation factor G"/>
    <property type="match status" value="1"/>
</dbReference>
<dbReference type="Gene3D" id="3.30.230.10">
    <property type="match status" value="1"/>
</dbReference>
<dbReference type="Gene3D" id="3.30.70.240">
    <property type="match status" value="1"/>
</dbReference>
<dbReference type="Gene3D" id="3.30.70.870">
    <property type="entry name" value="Elongation Factor G (Translational Gtpase), domain 3"/>
    <property type="match status" value="1"/>
</dbReference>
<dbReference type="Gene3D" id="3.40.50.300">
    <property type="entry name" value="P-loop containing nucleotide triphosphate hydrolases"/>
    <property type="match status" value="1"/>
</dbReference>
<dbReference type="Gene3D" id="2.40.30.10">
    <property type="entry name" value="Translation factors"/>
    <property type="match status" value="1"/>
</dbReference>
<dbReference type="HAMAP" id="MF_00054_B">
    <property type="entry name" value="EF_G_EF_2_B"/>
    <property type="match status" value="1"/>
</dbReference>
<dbReference type="HAMAP" id="MF_03063">
    <property type="entry name" value="EF_G_plantC"/>
    <property type="match status" value="1"/>
</dbReference>
<dbReference type="InterPro" id="IPR030848">
    <property type="entry name" value="EF_G_plantC"/>
</dbReference>
<dbReference type="InterPro" id="IPR041095">
    <property type="entry name" value="EFG_II"/>
</dbReference>
<dbReference type="InterPro" id="IPR009022">
    <property type="entry name" value="EFG_III"/>
</dbReference>
<dbReference type="InterPro" id="IPR035647">
    <property type="entry name" value="EFG_III/V"/>
</dbReference>
<dbReference type="InterPro" id="IPR047872">
    <property type="entry name" value="EFG_IV"/>
</dbReference>
<dbReference type="InterPro" id="IPR035649">
    <property type="entry name" value="EFG_V"/>
</dbReference>
<dbReference type="InterPro" id="IPR000640">
    <property type="entry name" value="EFG_V-like"/>
</dbReference>
<dbReference type="InterPro" id="IPR004161">
    <property type="entry name" value="EFTu-like_2"/>
</dbReference>
<dbReference type="InterPro" id="IPR031157">
    <property type="entry name" value="G_TR_CS"/>
</dbReference>
<dbReference type="InterPro" id="IPR027417">
    <property type="entry name" value="P-loop_NTPase"/>
</dbReference>
<dbReference type="InterPro" id="IPR020568">
    <property type="entry name" value="Ribosomal_Su5_D2-typ_SF"/>
</dbReference>
<dbReference type="InterPro" id="IPR014721">
    <property type="entry name" value="Ribsml_uS5_D2-typ_fold_subgr"/>
</dbReference>
<dbReference type="InterPro" id="IPR005225">
    <property type="entry name" value="Small_GTP-bd"/>
</dbReference>
<dbReference type="InterPro" id="IPR000795">
    <property type="entry name" value="T_Tr_GTP-bd_dom"/>
</dbReference>
<dbReference type="InterPro" id="IPR009000">
    <property type="entry name" value="Transl_B-barrel_sf"/>
</dbReference>
<dbReference type="InterPro" id="IPR004540">
    <property type="entry name" value="Transl_elong_EFG/EF2"/>
</dbReference>
<dbReference type="InterPro" id="IPR005517">
    <property type="entry name" value="Transl_elong_EFG/EF2_IV"/>
</dbReference>
<dbReference type="NCBIfam" id="TIGR00484">
    <property type="entry name" value="EF-G"/>
    <property type="match status" value="1"/>
</dbReference>
<dbReference type="NCBIfam" id="NF009379">
    <property type="entry name" value="PRK12740.1-3"/>
    <property type="match status" value="1"/>
</dbReference>
<dbReference type="NCBIfam" id="NF009381">
    <property type="entry name" value="PRK12740.1-5"/>
    <property type="match status" value="1"/>
</dbReference>
<dbReference type="NCBIfam" id="TIGR00231">
    <property type="entry name" value="small_GTP"/>
    <property type="match status" value="1"/>
</dbReference>
<dbReference type="PANTHER" id="PTHR43261:SF1">
    <property type="entry name" value="RIBOSOME-RELEASING FACTOR 2, MITOCHONDRIAL"/>
    <property type="match status" value="1"/>
</dbReference>
<dbReference type="PANTHER" id="PTHR43261">
    <property type="entry name" value="TRANSLATION ELONGATION FACTOR G-RELATED"/>
    <property type="match status" value="1"/>
</dbReference>
<dbReference type="Pfam" id="PF00679">
    <property type="entry name" value="EFG_C"/>
    <property type="match status" value="1"/>
</dbReference>
<dbReference type="Pfam" id="PF14492">
    <property type="entry name" value="EFG_III"/>
    <property type="match status" value="1"/>
</dbReference>
<dbReference type="Pfam" id="PF03764">
    <property type="entry name" value="EFG_IV"/>
    <property type="match status" value="1"/>
</dbReference>
<dbReference type="Pfam" id="PF00009">
    <property type="entry name" value="GTP_EFTU"/>
    <property type="match status" value="1"/>
</dbReference>
<dbReference type="Pfam" id="PF03144">
    <property type="entry name" value="GTP_EFTU_D2"/>
    <property type="match status" value="1"/>
</dbReference>
<dbReference type="PRINTS" id="PR00315">
    <property type="entry name" value="ELONGATNFCT"/>
</dbReference>
<dbReference type="SMART" id="SM00838">
    <property type="entry name" value="EFG_C"/>
    <property type="match status" value="1"/>
</dbReference>
<dbReference type="SMART" id="SM00889">
    <property type="entry name" value="EFG_IV"/>
    <property type="match status" value="1"/>
</dbReference>
<dbReference type="SUPFAM" id="SSF54980">
    <property type="entry name" value="EF-G C-terminal domain-like"/>
    <property type="match status" value="2"/>
</dbReference>
<dbReference type="SUPFAM" id="SSF52540">
    <property type="entry name" value="P-loop containing nucleoside triphosphate hydrolases"/>
    <property type="match status" value="1"/>
</dbReference>
<dbReference type="SUPFAM" id="SSF54211">
    <property type="entry name" value="Ribosomal protein S5 domain 2-like"/>
    <property type="match status" value="1"/>
</dbReference>
<dbReference type="SUPFAM" id="SSF50447">
    <property type="entry name" value="Translation proteins"/>
    <property type="match status" value="1"/>
</dbReference>
<dbReference type="PROSITE" id="PS00301">
    <property type="entry name" value="G_TR_1"/>
    <property type="match status" value="1"/>
</dbReference>
<dbReference type="PROSITE" id="PS51722">
    <property type="entry name" value="G_TR_2"/>
    <property type="match status" value="1"/>
</dbReference>
<sequence length="787" mass="86900">MAAESSLRVATPTLCNLNGSQRRPTTTTLSPLRFMGFRPRPSSHSLTSSSLSHFFGSTRIHSNSSSSYSSISRQHAPRRNFSVFAMSADDAKRSVPLKDYRNIGIMAHIDAGKTTTTERILYYTGRNYKIGEVHEGTATMDWMEQEQERGITITSAATTTFWNKHRINIIDTPGHVDFTLEVERALRVLDGAICLFDSVAGVEPQSETVWRQADKYGVPRICFVNKMDRLGANFYRTRDMIVTNLGAKPLVIQLPIGSEDNFKGVIDLVRNKAIVWSGEELGAKFDIVDIPEDLQEQAQDYRAQMIENIVEFDDQAMENYLEGIEPDEETIKKLIRKGTISASFVPVMCGSAFKNKGVQPLLDAVVDYLPSPLDLPAMKGSDPENPEATIERLASDDEPFAGLAFKIMSDPFVGSLTFVRVYAGKLGAGSYVLNANKGKKERIGRLLEMHANSRDDVKVALAGDIIALAGLKDTITGETLCDPDNPIVLERMDFPDPVIKVAIEPKTKADVDKMATGLIKLAQEDPSFHFSRDEEINQTVIEGMGELHLEIIVDRLKREFKVEANVGAPQVNYRESISKISEVKYVHKKQSGGQGQFADITVRFEPMDPGSGYEFKSEIKGGAVPREYIPGVMKGLEECMSNGVLAGFPVVDVRAVLTDGSYHDVDSSVLAFQLAARGAFREGIRKAGPRMLEPIMKVEVVTPEEHLGDVIGDLNSRRGQINSFGDKPGGLKVVDSLVPLAEMFQYVSTLRGMTKGRASYTMQLAMFDVVPQHIQNQLATKEQEVAA</sequence>
<feature type="transit peptide" description="Chloroplast" evidence="1">
    <location>
        <begin position="1"/>
        <end position="86"/>
    </location>
</feature>
<feature type="chain" id="PRO_0000007439" description="Elongation factor G-1, chloroplastic">
    <location>
        <begin position="87"/>
        <end position="787"/>
    </location>
</feature>
<feature type="domain" description="tr-type G">
    <location>
        <begin position="98"/>
        <end position="373"/>
    </location>
</feature>
<feature type="region of interest" description="Disordered" evidence="2">
    <location>
        <begin position="14"/>
        <end position="34"/>
    </location>
</feature>
<feature type="compositionally biased region" description="Polar residues" evidence="2">
    <location>
        <begin position="14"/>
        <end position="24"/>
    </location>
</feature>
<feature type="binding site" evidence="1">
    <location>
        <begin position="107"/>
        <end position="114"/>
    </location>
    <ligand>
        <name>GTP</name>
        <dbReference type="ChEBI" id="CHEBI:37565"/>
    </ligand>
</feature>
<feature type="binding site" evidence="1">
    <location>
        <begin position="171"/>
        <end position="175"/>
    </location>
    <ligand>
        <name>GTP</name>
        <dbReference type="ChEBI" id="CHEBI:37565"/>
    </ligand>
</feature>
<feature type="binding site" evidence="1">
    <location>
        <begin position="225"/>
        <end position="228"/>
    </location>
    <ligand>
        <name>GTP</name>
        <dbReference type="ChEBI" id="CHEBI:37565"/>
    </ligand>
</feature>
<feature type="sequence conflict" description="In Ref. 1; CAA50573." evidence="3" ref="1">
    <original>D</original>
    <variation>DG</variation>
    <location>
        <position position="89"/>
    </location>
</feature>
<proteinExistence type="inferred from homology"/>
<gene>
    <name type="primary">fusA1</name>
</gene>
<name>EFGC1_SOYBN</name>
<keyword id="KW-0150">Chloroplast</keyword>
<keyword id="KW-0251">Elongation factor</keyword>
<keyword id="KW-0342">GTP-binding</keyword>
<keyword id="KW-0547">Nucleotide-binding</keyword>
<keyword id="KW-0934">Plastid</keyword>
<keyword id="KW-0648">Protein biosynthesis</keyword>
<keyword id="KW-1185">Reference proteome</keyword>
<keyword id="KW-0809">Transit peptide</keyword>
<reference key="1">
    <citation type="journal article" date="1993" name="Biochim. Biophys. Acta">
        <title>Cloning and sequencing of a soybean nuclear gene coding for a chloroplast translation elongation factor EF-G.</title>
        <authorList>
            <person name="Torres J.H."/>
            <person name="Breitenberger C.A."/>
            <person name="Spielmann A."/>
            <person name="Stutz E."/>
        </authorList>
    </citation>
    <scope>NUCLEOTIDE SEQUENCE [GENOMIC DNA]</scope>
    <source>
        <strain>cv. Maple Arrow</strain>
    </source>
</reference>
<reference key="2">
    <citation type="journal article" date="2010" name="Nature">
        <title>Genome sequence of the palaeopolyploid soybean.</title>
        <authorList>
            <person name="Schmutz J."/>
            <person name="Cannon S.B."/>
            <person name="Schlueter J."/>
            <person name="Ma J."/>
            <person name="Mitros T."/>
            <person name="Nelson W."/>
            <person name="Hyten D.L."/>
            <person name="Song Q."/>
            <person name="Thelen J.J."/>
            <person name="Cheng J."/>
            <person name="Xu D."/>
            <person name="Hellsten U."/>
            <person name="May G.D."/>
            <person name="Yu Y."/>
            <person name="Sakurai T."/>
            <person name="Umezawa T."/>
            <person name="Bhattacharyya M.K."/>
            <person name="Sandhu D."/>
            <person name="Valliyodan B."/>
            <person name="Lindquist E."/>
            <person name="Peto M."/>
            <person name="Grant D."/>
            <person name="Shu S."/>
            <person name="Goodstein D."/>
            <person name="Barry K."/>
            <person name="Futrell-Griggs M."/>
            <person name="Abernathy B."/>
            <person name="Du J."/>
            <person name="Tian Z."/>
            <person name="Zhu L."/>
            <person name="Gill N."/>
            <person name="Joshi T."/>
            <person name="Libault M."/>
            <person name="Sethuraman A."/>
            <person name="Zhang X.-C."/>
            <person name="Shinozaki K."/>
            <person name="Nguyen H.T."/>
            <person name="Wing R.A."/>
            <person name="Cregan P."/>
            <person name="Specht J."/>
            <person name="Grimwood J."/>
            <person name="Rokhsar D."/>
            <person name="Stacey G."/>
            <person name="Shoemaker R.C."/>
            <person name="Jackson S.A."/>
        </authorList>
    </citation>
    <scope>NUCLEOTIDE SEQUENCE [LARGE SCALE GENOMIC DNA]</scope>
    <source>
        <strain>cv. Williams 82</strain>
    </source>
</reference>
<comment type="function">
    <text evidence="1">Chloroplast-localized elongation factor EF-G involved in protein synthesis in plastids. Catalyzes the GTP-dependent ribosomal translocation step during translation elongation. During this step, the ribosome changes from the pre-translocational (PRE) to the post-translocational (POST) state as the newly formed A-site-bound peptidyl-tRNA and P-site-bound deacylated tRNA move to the P and E sites, respectively. Catalyzes the coordinated movement of the two tRNA molecules, the mRNA and conformational changes in the ribosome.</text>
</comment>
<comment type="pathway">
    <text evidence="1">Protein biosynthesis; polypeptide chain elongation.</text>
</comment>
<comment type="subcellular location">
    <subcellularLocation>
        <location evidence="1">Plastid</location>
        <location evidence="1">Chloroplast</location>
    </subcellularLocation>
</comment>
<comment type="similarity">
    <text evidence="1">Belongs to the TRAFAC class translation factor GTPase superfamily. Classic translation factor GTPase family. EF-G/EF-2 subfamily.</text>
</comment>
<comment type="sequence caution" evidence="3">
    <conflict type="erroneous initiation">
        <sequence resource="EMBL-CDS" id="CAA50573"/>
    </conflict>
    <text>Truncated N-terminus.</text>
</comment>
<evidence type="ECO:0000255" key="1">
    <source>
        <dbReference type="HAMAP-Rule" id="MF_03063"/>
    </source>
</evidence>
<evidence type="ECO:0000256" key="2">
    <source>
        <dbReference type="SAM" id="MobiDB-lite"/>
    </source>
</evidence>
<evidence type="ECO:0000305" key="3"/>
<organism>
    <name type="scientific">Glycine max</name>
    <name type="common">Soybean</name>
    <name type="synonym">Glycine hispida</name>
    <dbReference type="NCBI Taxonomy" id="3847"/>
    <lineage>
        <taxon>Eukaryota</taxon>
        <taxon>Viridiplantae</taxon>
        <taxon>Streptophyta</taxon>
        <taxon>Embryophyta</taxon>
        <taxon>Tracheophyta</taxon>
        <taxon>Spermatophyta</taxon>
        <taxon>Magnoliopsida</taxon>
        <taxon>eudicotyledons</taxon>
        <taxon>Gunneridae</taxon>
        <taxon>Pentapetalae</taxon>
        <taxon>rosids</taxon>
        <taxon>fabids</taxon>
        <taxon>Fabales</taxon>
        <taxon>Fabaceae</taxon>
        <taxon>Papilionoideae</taxon>
        <taxon>50 kb inversion clade</taxon>
        <taxon>NPAAA clade</taxon>
        <taxon>indigoferoid/millettioid clade</taxon>
        <taxon>Phaseoleae</taxon>
        <taxon>Glycine</taxon>
        <taxon>Glycine subgen. Soja</taxon>
    </lineage>
</organism>
<protein>
    <recommendedName>
        <fullName>Elongation factor G-1, chloroplastic</fullName>
        <shortName evidence="1">cEF-G 1</shortName>
    </recommendedName>
</protein>
<accession>P34811</accession>
<accession>I1MUX0</accession>